<name>ARC2A_XENLA</name>
<dbReference type="EMBL" id="EF011864">
    <property type="protein sequence ID" value="ABL63897.1"/>
    <property type="molecule type" value="mRNA"/>
</dbReference>
<dbReference type="EMBL" id="CM004482">
    <property type="protein sequence ID" value="OCT63327.1"/>
    <property type="molecule type" value="Genomic_DNA"/>
</dbReference>
<dbReference type="EMBL" id="BC123262">
    <property type="protein sequence ID" value="AAI23263.1"/>
    <property type="molecule type" value="mRNA"/>
</dbReference>
<dbReference type="RefSeq" id="NP_001090493.1">
    <property type="nucleotide sequence ID" value="NM_001097024.1"/>
</dbReference>
<dbReference type="SMR" id="Q0IH88"/>
<dbReference type="IntAct" id="Q0IH88">
    <property type="interactions" value="1"/>
</dbReference>
<dbReference type="MINT" id="Q0IH88"/>
<dbReference type="STRING" id="8355.Q0IH88"/>
<dbReference type="PaxDb" id="8355-Q0IH88"/>
<dbReference type="DNASU" id="779406"/>
<dbReference type="GeneID" id="779406"/>
<dbReference type="KEGG" id="xla:779406"/>
<dbReference type="AGR" id="Xenbase:XB-GENE-866076"/>
<dbReference type="CTD" id="779406"/>
<dbReference type="Xenbase" id="XB-GENE-866076">
    <property type="gene designation" value="arpc2.L"/>
</dbReference>
<dbReference type="OMA" id="FRSYFHY"/>
<dbReference type="OrthoDB" id="148331at2759"/>
<dbReference type="Proteomes" id="UP000186698">
    <property type="component" value="Chromosome 9_10L"/>
</dbReference>
<dbReference type="Proteomes" id="UP000694892">
    <property type="component" value="Chromosome 9_10L"/>
</dbReference>
<dbReference type="Bgee" id="779406">
    <property type="expression patterns" value="Expressed in internal ear and 19 other cell types or tissues"/>
</dbReference>
<dbReference type="GO" id="GO:0005885">
    <property type="term" value="C:Arp2/3 protein complex"/>
    <property type="evidence" value="ECO:0000250"/>
    <property type="project" value="UniProtKB"/>
</dbReference>
<dbReference type="GO" id="GO:0042995">
    <property type="term" value="C:cell projection"/>
    <property type="evidence" value="ECO:0007669"/>
    <property type="project" value="UniProtKB-SubCell"/>
</dbReference>
<dbReference type="GO" id="GO:0005737">
    <property type="term" value="C:cytoplasm"/>
    <property type="evidence" value="ECO:0007669"/>
    <property type="project" value="UniProtKB-KW"/>
</dbReference>
<dbReference type="GO" id="GO:0005634">
    <property type="term" value="C:nucleus"/>
    <property type="evidence" value="ECO:0000250"/>
    <property type="project" value="UniProtKB"/>
</dbReference>
<dbReference type="GO" id="GO:0035861">
    <property type="term" value="C:site of double-strand break"/>
    <property type="evidence" value="ECO:0000250"/>
    <property type="project" value="UniProtKB"/>
</dbReference>
<dbReference type="GO" id="GO:0051015">
    <property type="term" value="F:actin filament binding"/>
    <property type="evidence" value="ECO:0000318"/>
    <property type="project" value="GO_Central"/>
</dbReference>
<dbReference type="GO" id="GO:0005200">
    <property type="term" value="F:structural constituent of cytoskeleton"/>
    <property type="evidence" value="ECO:0000318"/>
    <property type="project" value="GO_Central"/>
</dbReference>
<dbReference type="GO" id="GO:0030041">
    <property type="term" value="P:actin filament polymerization"/>
    <property type="evidence" value="ECO:0007669"/>
    <property type="project" value="InterPro"/>
</dbReference>
<dbReference type="GO" id="GO:0034314">
    <property type="term" value="P:Arp2/3 complex-mediated actin nucleation"/>
    <property type="evidence" value="ECO:0000318"/>
    <property type="project" value="GO_Central"/>
</dbReference>
<dbReference type="FunFam" id="3.30.1460.20:FF:000002">
    <property type="entry name" value="Arp2/3 complex 34 kDa subunit"/>
    <property type="match status" value="1"/>
</dbReference>
<dbReference type="FunFam" id="3.30.1460.20:FF:000004">
    <property type="entry name" value="Arp2/3 complex 34 kDa subunit"/>
    <property type="match status" value="1"/>
</dbReference>
<dbReference type="Gene3D" id="3.30.1460.20">
    <property type="match status" value="2"/>
</dbReference>
<dbReference type="InterPro" id="IPR007188">
    <property type="entry name" value="ARPC2"/>
</dbReference>
<dbReference type="InterPro" id="IPR034666">
    <property type="entry name" value="ARPC2/4"/>
</dbReference>
<dbReference type="PANTHER" id="PTHR12058:SF0">
    <property type="entry name" value="ACTIN-RELATED PROTEIN 2_3 COMPLEX SUBUNIT 2"/>
    <property type="match status" value="1"/>
</dbReference>
<dbReference type="PANTHER" id="PTHR12058">
    <property type="entry name" value="ARP2/3 COMPLEX 34 KDA SUBUNIT"/>
    <property type="match status" value="1"/>
</dbReference>
<dbReference type="Pfam" id="PF04045">
    <property type="entry name" value="P34-Arc"/>
    <property type="match status" value="1"/>
</dbReference>
<dbReference type="SUPFAM" id="SSF69645">
    <property type="entry name" value="Arp2/3 complex subunits"/>
    <property type="match status" value="2"/>
</dbReference>
<organism>
    <name type="scientific">Xenopus laevis</name>
    <name type="common">African clawed frog</name>
    <dbReference type="NCBI Taxonomy" id="8355"/>
    <lineage>
        <taxon>Eukaryota</taxon>
        <taxon>Metazoa</taxon>
        <taxon>Chordata</taxon>
        <taxon>Craniata</taxon>
        <taxon>Vertebrata</taxon>
        <taxon>Euteleostomi</taxon>
        <taxon>Amphibia</taxon>
        <taxon>Batrachia</taxon>
        <taxon>Anura</taxon>
        <taxon>Pipoidea</taxon>
        <taxon>Pipidae</taxon>
        <taxon>Xenopodinae</taxon>
        <taxon>Xenopus</taxon>
        <taxon>Xenopus</taxon>
    </lineage>
</organism>
<comment type="function">
    <text evidence="1 2 3">Actin-binding component of the Arp2/3 complex, a multiprotein complex that mediates actin polymerization upon stimulation by nucleation-promoting factor (NPF) (PubMed:17178911). The Arp2/3 complex mediates the formation of branched actin networks in the cytoplasm, providing the force for cell motility (PubMed:17178911). In addition to its role in the cytoplasmic cytoskeleton, the Arp2/3 complex also promotes actin polymerization in the nucleus, thereby regulating gene transcription and repair of damaged DNA (By similarity). The Arp2/3 complex promotes homologous recombination (HR) repair in response to DNA damage by promoting nuclear actin polymerization, leading to drive motility of double-strand breaks (DSBs) (By similarity).</text>
</comment>
<comment type="subunit">
    <text evidence="2">Component of the Arp2/3 complex composed of actr2/arp2, actr3/arp3, arpc1 (arpc1a or arpc1b), arpc2, arpc3, arpc4 and arpc5.</text>
</comment>
<comment type="subcellular location">
    <subcellularLocation>
        <location evidence="3">Cytoplasm</location>
        <location evidence="3">Cytoskeleton</location>
    </subcellularLocation>
    <subcellularLocation>
        <location evidence="3">Cell projection</location>
    </subcellularLocation>
    <subcellularLocation>
        <location evidence="2">Nucleus</location>
    </subcellularLocation>
</comment>
<comment type="similarity">
    <text evidence="4">Belongs to the ARPC2 family.</text>
</comment>
<gene>
    <name type="primary">arpc2-a</name>
    <name evidence="5" type="ORF">XELAEV_18044424mg</name>
</gene>
<sequence length="300" mass="34352">MILLEVNNRIIEEILTLKFENAAAGNKPEAVEVTFADFDGVLYHVSNPNGDKAKVLISISLKFYKELQEHGTDEVLKKVYGNFLVAPESGYNVSLLYDLESLPSNKDSVIHQAGMLKRNCFASVFEKYFKFQEEGKDGEKRAVIHYRDDETMYVEAKKDRVTVVFSTVFKDDDDVVIGKVFMQEFKEGRRASHTAPQVLFSHREPPLELKDTDAAVGDNIGYITFVLFPRHTNANARDNTINLIHTFRDYLHYHIKCSKAYIHTRMRAKTSDFLKVLNRARPDAEKKEMKTITGKTFAAR</sequence>
<feature type="chain" id="PRO_0000445559" description="Actin-related protein 2/3 complex subunit 2-A">
    <location>
        <begin position="1"/>
        <end position="300"/>
    </location>
</feature>
<reference key="1">
    <citation type="journal article" date="2006" name="J. Cell Biol.">
        <title>Actin turnover-dependent fast dissociation of capping protein in the dendritic nucleation actin network: evidence of frequent filament severing.</title>
        <authorList>
            <person name="Miyoshi T."/>
            <person name="Tsuji T."/>
            <person name="Higashida C."/>
            <person name="Hertzog M."/>
            <person name="Fujita A."/>
            <person name="Narumiya S."/>
            <person name="Scita G."/>
            <person name="Watanabe N."/>
        </authorList>
    </citation>
    <scope>NUCLEOTIDE SEQUENCE [MRNA]</scope>
    <scope>FUNCTION</scope>
    <scope>SUBCELLULAR LOCATION</scope>
</reference>
<reference key="2">
    <citation type="journal article" date="2016" name="Nature">
        <title>Genome evolution in the allotetraploid frog Xenopus laevis.</title>
        <authorList>
            <person name="Session A.M."/>
            <person name="Uno Y."/>
            <person name="Kwon T."/>
            <person name="Chapman J.A."/>
            <person name="Toyoda A."/>
            <person name="Takahashi S."/>
            <person name="Fukui A."/>
            <person name="Hikosaka A."/>
            <person name="Suzuki A."/>
            <person name="Kondo M."/>
            <person name="van Heeringen S.J."/>
            <person name="Quigley I."/>
            <person name="Heinz S."/>
            <person name="Ogino H."/>
            <person name="Ochi H."/>
            <person name="Hellsten U."/>
            <person name="Lyons J.B."/>
            <person name="Simakov O."/>
            <person name="Putnam N."/>
            <person name="Stites J."/>
            <person name="Kuroki Y."/>
            <person name="Tanaka T."/>
            <person name="Michiue T."/>
            <person name="Watanabe M."/>
            <person name="Bogdanovic O."/>
            <person name="Lister R."/>
            <person name="Georgiou G."/>
            <person name="Paranjpe S.S."/>
            <person name="van Kruijsbergen I."/>
            <person name="Shu S."/>
            <person name="Carlson J."/>
            <person name="Kinoshita T."/>
            <person name="Ohta Y."/>
            <person name="Mawaribuchi S."/>
            <person name="Jenkins J."/>
            <person name="Grimwood J."/>
            <person name="Schmutz J."/>
            <person name="Mitros T."/>
            <person name="Mozaffari S.V."/>
            <person name="Suzuki Y."/>
            <person name="Haramoto Y."/>
            <person name="Yamamoto T.S."/>
            <person name="Takagi C."/>
            <person name="Heald R."/>
            <person name="Miller K."/>
            <person name="Haudenschild C."/>
            <person name="Kitzman J."/>
            <person name="Nakayama T."/>
            <person name="Izutsu Y."/>
            <person name="Robert J."/>
            <person name="Fortriede J."/>
            <person name="Burns K."/>
            <person name="Lotay V."/>
            <person name="Karimi K."/>
            <person name="Yasuoka Y."/>
            <person name="Dichmann D.S."/>
            <person name="Flajnik M.F."/>
            <person name="Houston D.W."/>
            <person name="Shendure J."/>
            <person name="DuPasquier L."/>
            <person name="Vize P.D."/>
            <person name="Zorn A.M."/>
            <person name="Ito M."/>
            <person name="Marcotte E.M."/>
            <person name="Wallingford J.B."/>
            <person name="Ito Y."/>
            <person name="Asashima M."/>
            <person name="Ueno N."/>
            <person name="Matsuda Y."/>
            <person name="Veenstra G.J."/>
            <person name="Fujiyama A."/>
            <person name="Harland R.M."/>
            <person name="Taira M."/>
            <person name="Rokhsar D.S."/>
        </authorList>
    </citation>
    <scope>NUCLEOTIDE SEQUENCE [LARGE SCALE GENOMIC DNA]</scope>
    <source>
        <strain>J</strain>
    </source>
</reference>
<reference key="3">
    <citation type="submission" date="2006-09" db="EMBL/GenBank/DDBJ databases">
        <authorList>
            <consortium name="NIH - Xenopus Gene Collection (XGC) project"/>
        </authorList>
    </citation>
    <scope>NUCLEOTIDE SEQUENCE [LARGE SCALE MRNA]</scope>
    <source>
        <tissue>Embryo</tissue>
    </source>
</reference>
<evidence type="ECO:0000250" key="1">
    <source>
        <dbReference type="UniProtKB" id="O15144"/>
    </source>
</evidence>
<evidence type="ECO:0000250" key="2">
    <source>
        <dbReference type="UniProtKB" id="Q6IRB1"/>
    </source>
</evidence>
<evidence type="ECO:0000269" key="3">
    <source>
    </source>
</evidence>
<evidence type="ECO:0000305" key="4"/>
<evidence type="ECO:0000312" key="5">
    <source>
        <dbReference type="EMBL" id="OCT63327.1"/>
    </source>
</evidence>
<proteinExistence type="evidence at transcript level"/>
<keyword id="KW-0009">Actin-binding</keyword>
<keyword id="KW-0966">Cell projection</keyword>
<keyword id="KW-0963">Cytoplasm</keyword>
<keyword id="KW-0206">Cytoskeleton</keyword>
<keyword id="KW-0539">Nucleus</keyword>
<keyword id="KW-1185">Reference proteome</keyword>
<accession>Q0IH88</accession>
<protein>
    <recommendedName>
        <fullName>Actin-related protein 2/3 complex subunit 2-A</fullName>
    </recommendedName>
</protein>